<keyword id="KW-0175">Coiled coil</keyword>
<keyword id="KW-0963">Cytoplasm</keyword>
<keyword id="KW-0206">Cytoskeleton</keyword>
<keyword id="KW-0903">Direct protein sequencing</keyword>
<keyword id="KW-0931">ER-Golgi transport</keyword>
<keyword id="KW-0333">Golgi apparatus</keyword>
<keyword id="KW-0597">Phosphoprotein</keyword>
<keyword id="KW-1185">Reference proteome</keyword>
<keyword id="KW-0677">Repeat</keyword>
<keyword id="KW-0813">Transport</keyword>
<organism>
    <name type="scientific">Mus musculus</name>
    <name type="common">Mouse</name>
    <dbReference type="NCBI Taxonomy" id="10090"/>
    <lineage>
        <taxon>Eukaryota</taxon>
        <taxon>Metazoa</taxon>
        <taxon>Chordata</taxon>
        <taxon>Craniata</taxon>
        <taxon>Vertebrata</taxon>
        <taxon>Euteleostomi</taxon>
        <taxon>Mammalia</taxon>
        <taxon>Eutheria</taxon>
        <taxon>Euarchontoglires</taxon>
        <taxon>Glires</taxon>
        <taxon>Rodentia</taxon>
        <taxon>Myomorpha</taxon>
        <taxon>Muroidea</taxon>
        <taxon>Muridae</taxon>
        <taxon>Murinae</taxon>
        <taxon>Mus</taxon>
        <taxon>Mus</taxon>
    </lineage>
</organism>
<protein>
    <recommendedName>
        <fullName>N-terminal kinase-like protein</fullName>
    </recommendedName>
    <alternativeName>
        <fullName>105 kDa kinase-like protein</fullName>
    </alternativeName>
    <alternativeName>
        <fullName>Mitosis-associated kinase-like protein NTKL</fullName>
    </alternativeName>
    <alternativeName>
        <fullName>SCY1-like protein 1</fullName>
    </alternativeName>
</protein>
<reference key="1">
    <citation type="journal article" date="2000" name="Biochim. Biophys. Acta">
        <title>Cloning and preliminary characterization of a 105 kDa protein with an N-terminal kinase-like domain.</title>
        <authorList>
            <person name="Liu S.C.H."/>
            <person name="Lane W.S."/>
            <person name="Lienhard G.E."/>
        </authorList>
    </citation>
    <scope>NUCLEOTIDE SEQUENCE [MRNA]</scope>
    <scope>PARTIAL PROTEIN SEQUENCE</scope>
    <scope>SUBCELLULAR LOCATION</scope>
    <scope>TISSUE SPECIFICITY</scope>
    <source>
        <tissue>Adipocyte</tissue>
    </source>
</reference>
<reference key="2">
    <citation type="journal article" date="2005" name="Science">
        <title>The transcriptional landscape of the mammalian genome.</title>
        <authorList>
            <person name="Carninci P."/>
            <person name="Kasukawa T."/>
            <person name="Katayama S."/>
            <person name="Gough J."/>
            <person name="Frith M.C."/>
            <person name="Maeda N."/>
            <person name="Oyama R."/>
            <person name="Ravasi T."/>
            <person name="Lenhard B."/>
            <person name="Wells C."/>
            <person name="Kodzius R."/>
            <person name="Shimokawa K."/>
            <person name="Bajic V.B."/>
            <person name="Brenner S.E."/>
            <person name="Batalov S."/>
            <person name="Forrest A.R."/>
            <person name="Zavolan M."/>
            <person name="Davis M.J."/>
            <person name="Wilming L.G."/>
            <person name="Aidinis V."/>
            <person name="Allen J.E."/>
            <person name="Ambesi-Impiombato A."/>
            <person name="Apweiler R."/>
            <person name="Aturaliya R.N."/>
            <person name="Bailey T.L."/>
            <person name="Bansal M."/>
            <person name="Baxter L."/>
            <person name="Beisel K.W."/>
            <person name="Bersano T."/>
            <person name="Bono H."/>
            <person name="Chalk A.M."/>
            <person name="Chiu K.P."/>
            <person name="Choudhary V."/>
            <person name="Christoffels A."/>
            <person name="Clutterbuck D.R."/>
            <person name="Crowe M.L."/>
            <person name="Dalla E."/>
            <person name="Dalrymple B.P."/>
            <person name="de Bono B."/>
            <person name="Della Gatta G."/>
            <person name="di Bernardo D."/>
            <person name="Down T."/>
            <person name="Engstrom P."/>
            <person name="Fagiolini M."/>
            <person name="Faulkner G."/>
            <person name="Fletcher C.F."/>
            <person name="Fukushima T."/>
            <person name="Furuno M."/>
            <person name="Futaki S."/>
            <person name="Gariboldi M."/>
            <person name="Georgii-Hemming P."/>
            <person name="Gingeras T.R."/>
            <person name="Gojobori T."/>
            <person name="Green R.E."/>
            <person name="Gustincich S."/>
            <person name="Harbers M."/>
            <person name="Hayashi Y."/>
            <person name="Hensch T.K."/>
            <person name="Hirokawa N."/>
            <person name="Hill D."/>
            <person name="Huminiecki L."/>
            <person name="Iacono M."/>
            <person name="Ikeo K."/>
            <person name="Iwama A."/>
            <person name="Ishikawa T."/>
            <person name="Jakt M."/>
            <person name="Kanapin A."/>
            <person name="Katoh M."/>
            <person name="Kawasawa Y."/>
            <person name="Kelso J."/>
            <person name="Kitamura H."/>
            <person name="Kitano H."/>
            <person name="Kollias G."/>
            <person name="Krishnan S.P."/>
            <person name="Kruger A."/>
            <person name="Kummerfeld S.K."/>
            <person name="Kurochkin I.V."/>
            <person name="Lareau L.F."/>
            <person name="Lazarevic D."/>
            <person name="Lipovich L."/>
            <person name="Liu J."/>
            <person name="Liuni S."/>
            <person name="McWilliam S."/>
            <person name="Madan Babu M."/>
            <person name="Madera M."/>
            <person name="Marchionni L."/>
            <person name="Matsuda H."/>
            <person name="Matsuzawa S."/>
            <person name="Miki H."/>
            <person name="Mignone F."/>
            <person name="Miyake S."/>
            <person name="Morris K."/>
            <person name="Mottagui-Tabar S."/>
            <person name="Mulder N."/>
            <person name="Nakano N."/>
            <person name="Nakauchi H."/>
            <person name="Ng P."/>
            <person name="Nilsson R."/>
            <person name="Nishiguchi S."/>
            <person name="Nishikawa S."/>
            <person name="Nori F."/>
            <person name="Ohara O."/>
            <person name="Okazaki Y."/>
            <person name="Orlando V."/>
            <person name="Pang K.C."/>
            <person name="Pavan W.J."/>
            <person name="Pavesi G."/>
            <person name="Pesole G."/>
            <person name="Petrovsky N."/>
            <person name="Piazza S."/>
            <person name="Reed J."/>
            <person name="Reid J.F."/>
            <person name="Ring B.Z."/>
            <person name="Ringwald M."/>
            <person name="Rost B."/>
            <person name="Ruan Y."/>
            <person name="Salzberg S.L."/>
            <person name="Sandelin A."/>
            <person name="Schneider C."/>
            <person name="Schoenbach C."/>
            <person name="Sekiguchi K."/>
            <person name="Semple C.A."/>
            <person name="Seno S."/>
            <person name="Sessa L."/>
            <person name="Sheng Y."/>
            <person name="Shibata Y."/>
            <person name="Shimada H."/>
            <person name="Shimada K."/>
            <person name="Silva D."/>
            <person name="Sinclair B."/>
            <person name="Sperling S."/>
            <person name="Stupka E."/>
            <person name="Sugiura K."/>
            <person name="Sultana R."/>
            <person name="Takenaka Y."/>
            <person name="Taki K."/>
            <person name="Tammoja K."/>
            <person name="Tan S.L."/>
            <person name="Tang S."/>
            <person name="Taylor M.S."/>
            <person name="Tegner J."/>
            <person name="Teichmann S.A."/>
            <person name="Ueda H.R."/>
            <person name="van Nimwegen E."/>
            <person name="Verardo R."/>
            <person name="Wei C.L."/>
            <person name="Yagi K."/>
            <person name="Yamanishi H."/>
            <person name="Zabarovsky E."/>
            <person name="Zhu S."/>
            <person name="Zimmer A."/>
            <person name="Hide W."/>
            <person name="Bult C."/>
            <person name="Grimmond S.M."/>
            <person name="Teasdale R.D."/>
            <person name="Liu E.T."/>
            <person name="Brusic V."/>
            <person name="Quackenbush J."/>
            <person name="Wahlestedt C."/>
            <person name="Mattick J.S."/>
            <person name="Hume D.A."/>
            <person name="Kai C."/>
            <person name="Sasaki D."/>
            <person name="Tomaru Y."/>
            <person name="Fukuda S."/>
            <person name="Kanamori-Katayama M."/>
            <person name="Suzuki M."/>
            <person name="Aoki J."/>
            <person name="Arakawa T."/>
            <person name="Iida J."/>
            <person name="Imamura K."/>
            <person name="Itoh M."/>
            <person name="Kato T."/>
            <person name="Kawaji H."/>
            <person name="Kawagashira N."/>
            <person name="Kawashima T."/>
            <person name="Kojima M."/>
            <person name="Kondo S."/>
            <person name="Konno H."/>
            <person name="Nakano K."/>
            <person name="Ninomiya N."/>
            <person name="Nishio T."/>
            <person name="Okada M."/>
            <person name="Plessy C."/>
            <person name="Shibata K."/>
            <person name="Shiraki T."/>
            <person name="Suzuki S."/>
            <person name="Tagami M."/>
            <person name="Waki K."/>
            <person name="Watahiki A."/>
            <person name="Okamura-Oho Y."/>
            <person name="Suzuki H."/>
            <person name="Kawai J."/>
            <person name="Hayashizaki Y."/>
        </authorList>
    </citation>
    <scope>NUCLEOTIDE SEQUENCE [LARGE SCALE MRNA]</scope>
    <source>
        <strain>C57BL/6J</strain>
        <tissue>Fetal testis</tissue>
        <tissue>Leydig cell</tissue>
        <tissue>Placenta</tissue>
    </source>
</reference>
<reference key="3">
    <citation type="journal article" date="2004" name="Genome Res.">
        <title>The status, quality, and expansion of the NIH full-length cDNA project: the Mammalian Gene Collection (MGC).</title>
        <authorList>
            <consortium name="The MGC Project Team"/>
        </authorList>
    </citation>
    <scope>NUCLEOTIDE SEQUENCE [LARGE SCALE MRNA]</scope>
    <source>
        <strain>FVB/N</strain>
        <tissue>Mammary tumor</tissue>
    </source>
</reference>
<reference key="4">
    <citation type="journal article" date="2003" name="J. Hum. Genet.">
        <title>Cloning and characterization of a novel gene which encodes a protein interacting with the mitosis-associated kinase-like protein NTKL.</title>
        <authorList>
            <person name="Di Y."/>
            <person name="Li J."/>
            <person name="Fang J."/>
            <person name="Xu Z."/>
            <person name="He X."/>
            <person name="Zhang F."/>
            <person name="Ling J."/>
            <person name="Li X."/>
            <person name="Xu D."/>
            <person name="Li L."/>
            <person name="Li Y.Y."/>
            <person name="Huo K."/>
        </authorList>
    </citation>
    <scope>INTERACTION WITH GORAB</scope>
    <scope>SUBCELLULAR LOCATION</scope>
</reference>
<reference key="5">
    <citation type="journal article" date="2007" name="EMBO Rep.">
        <title>Mutation in the Scyl1 gene encoding amino-terminal kinase-like protein causes a recessive form of spinocerebellar neurodegeneration.</title>
        <authorList>
            <person name="Schmidt W.M."/>
            <person name="Kraus C."/>
            <person name="Hoeger H."/>
            <person name="Hochmeister S."/>
            <person name="Oberndorfer F."/>
            <person name="Branka M."/>
            <person name="Bingemann S."/>
            <person name="Lassmann H."/>
            <person name="Mueller M."/>
            <person name="Macedo-Souza L.I."/>
            <person name="Vainzof M."/>
            <person name="Zatz M."/>
            <person name="Reis A."/>
            <person name="Bittner R.E."/>
        </authorList>
    </citation>
    <scope>DISEASE</scope>
    <scope>TISSUE SPECIFICITY</scope>
</reference>
<reference key="6">
    <citation type="journal article" date="2008" name="J. Biol. Chem.">
        <title>Scyl1, mutated in a recessive form of spinocerebellar neurodegeneration, regulates COPI-mediated retrograde traffic.</title>
        <authorList>
            <person name="Burman J.L."/>
            <person name="Bourbonniere L."/>
            <person name="Philie J."/>
            <person name="Stroh T."/>
            <person name="Dejgaard S.Y."/>
            <person name="Presley J.F."/>
            <person name="McPherson P.S."/>
        </authorList>
    </citation>
    <scope>INTERACTION WITH COPA; COPB1 AND COPB2</scope>
    <scope>MUTAGENESIS OF 791-LYS-LYS-792</scope>
</reference>
<reference key="7">
    <citation type="journal article" date="2010" name="Cell">
        <title>A tissue-specific atlas of mouse protein phosphorylation and expression.</title>
        <authorList>
            <person name="Huttlin E.L."/>
            <person name="Jedrychowski M.P."/>
            <person name="Elias J.E."/>
            <person name="Goswami T."/>
            <person name="Rad R."/>
            <person name="Beausoleil S.A."/>
            <person name="Villen J."/>
            <person name="Haas W."/>
            <person name="Sowa M.E."/>
            <person name="Gygi S.P."/>
        </authorList>
    </citation>
    <scope>IDENTIFICATION BY MASS SPECTROMETRY [LARGE SCALE ANALYSIS]</scope>
    <source>
        <tissue>Brain</tissue>
        <tissue>Brown adipose tissue</tissue>
        <tissue>Heart</tissue>
        <tissue>Kidney</tissue>
        <tissue>Liver</tissue>
        <tissue>Lung</tissue>
        <tissue>Pancreas</tissue>
        <tissue>Spleen</tissue>
        <tissue>Testis</tissue>
    </source>
</reference>
<accession>Q9EQC5</accession>
<accession>Q3TST7</accession>
<accession>Q3UKU0</accession>
<accession>Q8K222</accession>
<gene>
    <name type="primary">Scyl1</name>
</gene>
<name>SCYL1_MOUSE</name>
<feature type="chain" id="PRO_0000249542" description="N-terminal kinase-like protein">
    <location>
        <begin position="1"/>
        <end position="806"/>
    </location>
</feature>
<feature type="domain" description="Protein kinase" evidence="4">
    <location>
        <begin position="14"/>
        <end position="314"/>
    </location>
</feature>
<feature type="repeat" description="HEAT 1">
    <location>
        <begin position="350"/>
        <end position="388"/>
    </location>
</feature>
<feature type="repeat" description="HEAT 2">
    <location>
        <begin position="389"/>
        <end position="427"/>
    </location>
</feature>
<feature type="repeat" description="HEAT 3">
    <location>
        <begin position="507"/>
        <end position="545"/>
    </location>
</feature>
<feature type="region of interest" description="Disordered" evidence="5">
    <location>
        <begin position="586"/>
        <end position="642"/>
    </location>
</feature>
<feature type="region of interest" description="Disordered" evidence="5">
    <location>
        <begin position="663"/>
        <end position="806"/>
    </location>
</feature>
<feature type="region of interest" description="Interaction with COPB1" evidence="9">
    <location>
        <begin position="791"/>
        <end position="806"/>
    </location>
</feature>
<feature type="coiled-coil region" evidence="3">
    <location>
        <begin position="755"/>
        <end position="795"/>
    </location>
</feature>
<feature type="compositionally biased region" description="Pro residues" evidence="5">
    <location>
        <begin position="601"/>
        <end position="611"/>
    </location>
</feature>
<feature type="compositionally biased region" description="Acidic residues" evidence="5">
    <location>
        <begin position="752"/>
        <end position="762"/>
    </location>
</feature>
<feature type="compositionally biased region" description="Basic and acidic residues" evidence="5">
    <location>
        <begin position="763"/>
        <end position="773"/>
    </location>
</feature>
<feature type="compositionally biased region" description="Basic and acidic residues" evidence="5">
    <location>
        <begin position="780"/>
        <end position="793"/>
    </location>
</feature>
<feature type="modified residue" description="Phosphoserine" evidence="2">
    <location>
        <position position="752"/>
    </location>
</feature>
<feature type="mutagenesis site" description="Decreased interaction with COPB1." evidence="9">
    <original>KK</original>
    <variation>AA</variation>
    <location>
        <begin position="791"/>
        <end position="792"/>
    </location>
</feature>
<feature type="sequence conflict" description="In Ref. 2; BAE26711." evidence="10" ref="2">
    <original>P</original>
    <variation>Q</variation>
    <location>
        <position position="187"/>
    </location>
</feature>
<feature type="sequence conflict" description="In Ref. 2; BAE22111/BAE36588." evidence="10" ref="2">
    <original>R</original>
    <variation>K</variation>
    <location>
        <position position="642"/>
    </location>
</feature>
<feature type="sequence conflict" description="In Ref. 2; BAE22111/BAE36588." evidence="10" ref="2">
    <location>
        <position position="653"/>
    </location>
</feature>
<feature type="sequence conflict" description="In Ref. 3; AAH34519." evidence="10" ref="3">
    <original>I</original>
    <variation>V</variation>
    <location>
        <position position="677"/>
    </location>
</feature>
<proteinExistence type="evidence at protein level"/>
<comment type="function">
    <text evidence="2">Regulates COPI-mediated retrograde protein traffic at the interface between the Golgi apparatus and the endoplasmic reticulum. Involved in the maintenance of the Golgi apparatus morphology.</text>
</comment>
<comment type="subunit">
    <text evidence="1">Homooligomer (By similarity). Interacts with GORAB. Interacts with COPA, COPB1 and COPB2. Interacts with AP2B1 (By similarity).</text>
</comment>
<comment type="subcellular location">
    <subcellularLocation>
        <location evidence="1">Cytoplasm</location>
        <location evidence="1">Cytoskeleton</location>
        <location evidence="1">Microtubule organizing center</location>
        <location evidence="1">Centrosome</location>
    </subcellularLocation>
    <subcellularLocation>
        <location evidence="6 7">Cytoplasm</location>
    </subcellularLocation>
    <subcellularLocation>
        <location evidence="1">Endoplasmic reticulum-Golgi intermediate compartment</location>
    </subcellularLocation>
    <subcellularLocation>
        <location evidence="1">Golgi apparatus</location>
        <location evidence="1">cis-Golgi network</location>
    </subcellularLocation>
    <text evidence="1">Localized to the Endoplasmic reticulum-Golgi intermediate and cis-Golgi in an ARF1-independent manner.</text>
</comment>
<comment type="tissue specificity">
    <text evidence="6 8">Expressed in diaphragm, quadriceps, thymus, liver, lung, spleen, kidney, heart and brain. Prominently expressed in neurons, and enriched at central nervous system synapses and neuromuscular junctions.</text>
</comment>
<comment type="domain">
    <text evidence="4">The protein kinase domain is predicted to be catalytically inactive.</text>
</comment>
<comment type="disease">
    <text evidence="8">Defects in Scyl1 are the cause of the muscle deficient phenotype (mdf). Mice exhibit progressive neuromuscular atrophy, hindlimb paralysis, gait ataxia, abnormal hindlimb posture and tremor. Pathology of mdf comprises cerebellar atrophy, Purkinje cell loss and optic nerve atrophy.</text>
</comment>
<comment type="similarity">
    <text evidence="10">Belongs to the protein kinase superfamily.</text>
</comment>
<evidence type="ECO:0000250" key="1"/>
<evidence type="ECO:0000250" key="2">
    <source>
        <dbReference type="UniProtKB" id="Q96KG9"/>
    </source>
</evidence>
<evidence type="ECO:0000255" key="3"/>
<evidence type="ECO:0000255" key="4">
    <source>
        <dbReference type="PROSITE-ProRule" id="PRU00159"/>
    </source>
</evidence>
<evidence type="ECO:0000256" key="5">
    <source>
        <dbReference type="SAM" id="MobiDB-lite"/>
    </source>
</evidence>
<evidence type="ECO:0000269" key="6">
    <source>
    </source>
</evidence>
<evidence type="ECO:0000269" key="7">
    <source>
    </source>
</evidence>
<evidence type="ECO:0000269" key="8">
    <source>
    </source>
</evidence>
<evidence type="ECO:0000269" key="9">
    <source>
    </source>
</evidence>
<evidence type="ECO:0000305" key="10"/>
<dbReference type="EMBL" id="AF276514">
    <property type="protein sequence ID" value="AAG17393.1"/>
    <property type="molecule type" value="mRNA"/>
</dbReference>
<dbReference type="EMBL" id="AK134356">
    <property type="protein sequence ID" value="BAE22111.1"/>
    <property type="molecule type" value="mRNA"/>
</dbReference>
<dbReference type="EMBL" id="AK144134">
    <property type="protein sequence ID" value="BAE25720.1"/>
    <property type="molecule type" value="mRNA"/>
</dbReference>
<dbReference type="EMBL" id="AK145869">
    <property type="protein sequence ID" value="BAE26711.1"/>
    <property type="molecule type" value="mRNA"/>
</dbReference>
<dbReference type="EMBL" id="AK161813">
    <property type="protein sequence ID" value="BAE36588.1"/>
    <property type="molecule type" value="mRNA"/>
</dbReference>
<dbReference type="EMBL" id="BC034519">
    <property type="protein sequence ID" value="AAH34519.1"/>
    <property type="molecule type" value="mRNA"/>
</dbReference>
<dbReference type="CCDS" id="CCDS29480.1"/>
<dbReference type="RefSeq" id="NP_076401.1">
    <property type="nucleotide sequence ID" value="NM_023912.3"/>
</dbReference>
<dbReference type="SMR" id="Q9EQC5"/>
<dbReference type="BioGRID" id="219686">
    <property type="interactions" value="3"/>
</dbReference>
<dbReference type="FunCoup" id="Q9EQC5">
    <property type="interactions" value="4815"/>
</dbReference>
<dbReference type="STRING" id="10090.ENSMUSP00000157476"/>
<dbReference type="ChEMBL" id="CHEMBL3721301"/>
<dbReference type="GlyGen" id="Q9EQC5">
    <property type="glycosylation" value="1 site, 1 N-linked glycan (1 site)"/>
</dbReference>
<dbReference type="iPTMnet" id="Q9EQC5"/>
<dbReference type="PhosphoSitePlus" id="Q9EQC5"/>
<dbReference type="SwissPalm" id="Q9EQC5"/>
<dbReference type="PaxDb" id="10090-ENSMUSP00000025890"/>
<dbReference type="PeptideAtlas" id="Q9EQC5"/>
<dbReference type="ProteomicsDB" id="253428"/>
<dbReference type="Pumba" id="Q9EQC5"/>
<dbReference type="Antibodypedia" id="7388">
    <property type="antibodies" value="170 antibodies from 26 providers"/>
</dbReference>
<dbReference type="DNASU" id="78891"/>
<dbReference type="Ensembl" id="ENSMUST00000236978.2">
    <property type="protein sequence ID" value="ENSMUSP00000157476.2"/>
    <property type="gene ID" value="ENSMUSG00000024941.10"/>
</dbReference>
<dbReference type="GeneID" id="78891"/>
<dbReference type="KEGG" id="mmu:78891"/>
<dbReference type="UCSC" id="uc008gfh.1">
    <property type="organism name" value="mouse"/>
</dbReference>
<dbReference type="AGR" id="MGI:1931787"/>
<dbReference type="CTD" id="57410"/>
<dbReference type="MGI" id="MGI:1931787">
    <property type="gene designation" value="Scyl1"/>
</dbReference>
<dbReference type="VEuPathDB" id="HostDB:ENSMUSG00000024941"/>
<dbReference type="eggNOG" id="KOG1243">
    <property type="taxonomic scope" value="Eukaryota"/>
</dbReference>
<dbReference type="GeneTree" id="ENSGT00930000151054"/>
<dbReference type="HOGENOM" id="CLU_010392_0_1_1"/>
<dbReference type="InParanoid" id="Q9EQC5"/>
<dbReference type="OMA" id="NDTSWAG"/>
<dbReference type="OrthoDB" id="447103at2759"/>
<dbReference type="PhylomeDB" id="Q9EQC5"/>
<dbReference type="TreeFam" id="TF313435"/>
<dbReference type="BioGRID-ORCS" id="78891">
    <property type="hits" value="6 hits in 81 CRISPR screens"/>
</dbReference>
<dbReference type="ChiTaRS" id="Scyl1">
    <property type="organism name" value="mouse"/>
</dbReference>
<dbReference type="PRO" id="PR:Q9EQC5"/>
<dbReference type="Proteomes" id="UP000000589">
    <property type="component" value="Chromosome 19"/>
</dbReference>
<dbReference type="RNAct" id="Q9EQC5">
    <property type="molecule type" value="protein"/>
</dbReference>
<dbReference type="Bgee" id="ENSMUSG00000024941">
    <property type="expression patterns" value="Expressed in ascending aorta and 264 other cell types or tissues"/>
</dbReference>
<dbReference type="ExpressionAtlas" id="Q9EQC5">
    <property type="expression patterns" value="baseline and differential"/>
</dbReference>
<dbReference type="GO" id="GO:0005813">
    <property type="term" value="C:centrosome"/>
    <property type="evidence" value="ECO:0007669"/>
    <property type="project" value="UniProtKB-SubCell"/>
</dbReference>
<dbReference type="GO" id="GO:0005801">
    <property type="term" value="C:cis-Golgi network"/>
    <property type="evidence" value="ECO:0000250"/>
    <property type="project" value="UniProtKB"/>
</dbReference>
<dbReference type="GO" id="GO:0030126">
    <property type="term" value="C:COPI vesicle coat"/>
    <property type="evidence" value="ECO:0000314"/>
    <property type="project" value="UniProtKB"/>
</dbReference>
<dbReference type="GO" id="GO:0005737">
    <property type="term" value="C:cytoplasm"/>
    <property type="evidence" value="ECO:0000314"/>
    <property type="project" value="HGNC-UCL"/>
</dbReference>
<dbReference type="GO" id="GO:0005829">
    <property type="term" value="C:cytosol"/>
    <property type="evidence" value="ECO:0007669"/>
    <property type="project" value="Ensembl"/>
</dbReference>
<dbReference type="GO" id="GO:0005793">
    <property type="term" value="C:endoplasmic reticulum-Golgi intermediate compartment"/>
    <property type="evidence" value="ECO:0000250"/>
    <property type="project" value="UniProtKB"/>
</dbReference>
<dbReference type="GO" id="GO:0005794">
    <property type="term" value="C:Golgi apparatus"/>
    <property type="evidence" value="ECO:0000250"/>
    <property type="project" value="UniProtKB"/>
</dbReference>
<dbReference type="GO" id="GO:0005524">
    <property type="term" value="F:ATP binding"/>
    <property type="evidence" value="ECO:0007669"/>
    <property type="project" value="InterPro"/>
</dbReference>
<dbReference type="GO" id="GO:0004672">
    <property type="term" value="F:protein kinase activity"/>
    <property type="evidence" value="ECO:0007669"/>
    <property type="project" value="InterPro"/>
</dbReference>
<dbReference type="GO" id="GO:0006954">
    <property type="term" value="P:inflammatory response"/>
    <property type="evidence" value="ECO:0000315"/>
    <property type="project" value="MGI"/>
</dbReference>
<dbReference type="GO" id="GO:0048666">
    <property type="term" value="P:neuron development"/>
    <property type="evidence" value="ECO:0000316"/>
    <property type="project" value="MGI"/>
</dbReference>
<dbReference type="GO" id="GO:0008104">
    <property type="term" value="P:protein localization"/>
    <property type="evidence" value="ECO:0000315"/>
    <property type="project" value="MGI"/>
</dbReference>
<dbReference type="GO" id="GO:0006890">
    <property type="term" value="P:retrograde vesicle-mediated transport, Golgi to endoplasmic reticulum"/>
    <property type="evidence" value="ECO:0000250"/>
    <property type="project" value="UniProtKB"/>
</dbReference>
<dbReference type="GO" id="GO:0021522">
    <property type="term" value="P:spinal cord motor neuron differentiation"/>
    <property type="evidence" value="ECO:0000315"/>
    <property type="project" value="MGI"/>
</dbReference>
<dbReference type="CDD" id="cd14011">
    <property type="entry name" value="PK_SCY1_like"/>
    <property type="match status" value="1"/>
</dbReference>
<dbReference type="FunFam" id="1.25.10.10:FF:000108">
    <property type="entry name" value="N-terminal kinase-like protein isoform X1"/>
    <property type="match status" value="1"/>
</dbReference>
<dbReference type="FunFam" id="1.10.510.10:FF:000324">
    <property type="entry name" value="N-terminal kinase-like protein isoform X2"/>
    <property type="match status" value="1"/>
</dbReference>
<dbReference type="FunFam" id="3.30.200.20:FF:000311">
    <property type="entry name" value="N-terminal kinase-like protein isoform X2"/>
    <property type="match status" value="1"/>
</dbReference>
<dbReference type="Gene3D" id="1.25.10.10">
    <property type="entry name" value="Leucine-rich Repeat Variant"/>
    <property type="match status" value="1"/>
</dbReference>
<dbReference type="Gene3D" id="3.30.200.20">
    <property type="entry name" value="Phosphorylase Kinase, domain 1"/>
    <property type="match status" value="1"/>
</dbReference>
<dbReference type="Gene3D" id="1.10.510.10">
    <property type="entry name" value="Transferase(Phosphotransferase) domain 1"/>
    <property type="match status" value="1"/>
</dbReference>
<dbReference type="InterPro" id="IPR011989">
    <property type="entry name" value="ARM-like"/>
</dbReference>
<dbReference type="InterPro" id="IPR016024">
    <property type="entry name" value="ARM-type_fold"/>
</dbReference>
<dbReference type="InterPro" id="IPR051177">
    <property type="entry name" value="CIK-Related_Protein"/>
</dbReference>
<dbReference type="InterPro" id="IPR011009">
    <property type="entry name" value="Kinase-like_dom_sf"/>
</dbReference>
<dbReference type="InterPro" id="IPR000719">
    <property type="entry name" value="Prot_kinase_dom"/>
</dbReference>
<dbReference type="PANTHER" id="PTHR12984:SF3">
    <property type="entry name" value="N-TERMINAL KINASE-LIKE PROTEIN"/>
    <property type="match status" value="1"/>
</dbReference>
<dbReference type="PANTHER" id="PTHR12984">
    <property type="entry name" value="SCY1-RELATED S/T PROTEIN KINASE-LIKE"/>
    <property type="match status" value="1"/>
</dbReference>
<dbReference type="Pfam" id="PF00069">
    <property type="entry name" value="Pkinase"/>
    <property type="match status" value="1"/>
</dbReference>
<dbReference type="SMART" id="SM00220">
    <property type="entry name" value="S_TKc"/>
    <property type="match status" value="1"/>
</dbReference>
<dbReference type="SUPFAM" id="SSF48371">
    <property type="entry name" value="ARM repeat"/>
    <property type="match status" value="1"/>
</dbReference>
<dbReference type="SUPFAM" id="SSF56112">
    <property type="entry name" value="Protein kinase-like (PK-like)"/>
    <property type="match status" value="1"/>
</dbReference>
<dbReference type="PROSITE" id="PS50011">
    <property type="entry name" value="PROTEIN_KINASE_DOM"/>
    <property type="match status" value="1"/>
</dbReference>
<sequence length="806" mass="89160">MWFFARDPVRDFPFELSPEPPEGGPPGPWILHRGRKKATGSAVSIFVYDVKPGAEEQTQVAKAAFKRLKTLRHPNILAYIDGLETEKCLHIVTEAVTPLGTYLKARAEAGGLKEQELSWGLHQIVKALSFLVNDCNLIHNNVCMAAVFVDRAGEWKLGGLDYMYSAQGNGGGPPSKGIPELEQYDPPELADSSSRAVREKWSADMWRLGCLIWEVFNGSLPRAAALRNPGKIPKSLVTHYCELVGANPKVRPNPARFLQNCRAPGGFMSNRFVETNLFLEEIQIKEPAEKQKFFQELSKSLDSFPEDFCRHKVLPQLLTAFEFGNAGAVVLTPLFKVGKSLRAEEYQEKIIPVVVKMFSSTDRAMRIRLLQQMEQFIQYLDEPTVNTQIFPHVTHGFLDTNPAIREQTVKSMLLLAPKLNEANLNVELMKHFARLQAKDDQGPIRCNTTVCLGKIGSYLSASTRHRVLTSAFSRATKDPFAPSRVAGVLGFAATHNLYSMDDCAHKILPVLCGLTVDPEKSVRDQAFKTIRSFLSKLESVSEDPTQLAEVEKDVHAASSPGTGGAAASWAGWAVTGVSSLTSKLIRAHPTPVPSDTTVPQRPVPEGNPAPAPALAQAIPATSGHWETQEDKDTAEDSATADRWDDEDWGSLEQEAESVLAQQDDWSAKGQGSRAGQINHPDHKSLESHWSSWEVEGSWDQGWQEPSSVEPPPEGTRLASEYNWGGAEPSDKGDPFAALSVRPSAQPRPDPDSWGEDNWEGLEAESRQVKAELARKKREERRREMEAKRAEKKTTKGPMKLGARKLD</sequence>